<reference key="1">
    <citation type="journal article" date="1994" name="Fukui-ken Nogyo Shikenjo Kenkyu Hokoku">
        <title>Cloning of the coat protein, 3a protein and replicase genes of cucumber mosaic virus using reverse transcription-polymerase chain reaction (RT-PCR).</title>
        <authorList>
            <person name="Takamatsu S."/>
            <person name="Makara K."/>
        </authorList>
    </citation>
    <scope>NUCLEOTIDE SEQUENCE [GENOMIC RNA]</scope>
</reference>
<reference key="2">
    <citation type="journal article" date="1996" name="Nihon Shokubutsu Byori Gakkaiho">
        <title>Six new subgroup I members of Japanese cucumber mosaic virus as determined by nucleotide sequence analysis on RNA3's cDNAs.</title>
        <authorList>
            <person name="Chaumpluk P."/>
            <person name="Sasaki Y."/>
            <person name="Nakajima N."/>
            <person name="Nagano H."/>
            <person name="Nakamura I."/>
            <person name="Suzuki K."/>
            <person name="Mise K."/>
            <person name="Inouye N."/>
            <person name="Okuno T."/>
            <person name="Furusawa I."/>
        </authorList>
    </citation>
    <scope>NUCLEOTIDE SEQUENCE [GENOMIC RNA]</scope>
</reference>
<comment type="function">
    <text evidence="1">Transports viral genome to neighboring plant cells directly through plasmosdesmata, without any budding. The movement protein allows efficient cell to cell propagation, by bypassing the host cell wall barrier. Acts by forming a tubular structure at the host plasmodesmata, enlarging it enough to allow free passage of virion capsids (By similarity).</text>
</comment>
<comment type="subcellular location">
    <subcellularLocation>
        <location evidence="1">Host cell junction</location>
        <location evidence="1">Host plasmodesma</location>
    </subcellularLocation>
    <text evidence="1">Assembles into long tubular structures at the surface of the infected protoplast.</text>
</comment>
<comment type="similarity">
    <text evidence="3">Belongs to the cucumovirus movement protein family.</text>
</comment>
<feature type="chain" id="PRO_0000083246" description="Movement protein">
    <location>
        <begin position="1"/>
        <end position="279"/>
    </location>
</feature>
<feature type="region of interest" description="Disordered" evidence="2">
    <location>
        <begin position="247"/>
        <end position="279"/>
    </location>
</feature>
<feature type="compositionally biased region" description="Low complexity" evidence="2">
    <location>
        <begin position="254"/>
        <end position="268"/>
    </location>
</feature>
<name>MVP_CMVPE</name>
<evidence type="ECO:0000250" key="1"/>
<evidence type="ECO:0000256" key="2">
    <source>
        <dbReference type="SAM" id="MobiDB-lite"/>
    </source>
</evidence>
<evidence type="ECO:0000305" key="3"/>
<organismHost>
    <name type="scientific">Cucumis sativus</name>
    <name type="common">Cucumber</name>
    <dbReference type="NCBI Taxonomy" id="3659"/>
</organismHost>
<organismHost>
    <name type="scientific">Solanum lycopersicum</name>
    <name type="common">Tomato</name>
    <name type="synonym">Lycopersicon esculentum</name>
    <dbReference type="NCBI Taxonomy" id="4081"/>
</organismHost>
<organismHost>
    <name type="scientific">Spinacia oleracea</name>
    <name type="common">Spinach</name>
    <dbReference type="NCBI Taxonomy" id="3562"/>
</organismHost>
<organism>
    <name type="scientific">Cucumber mosaic virus (strain Pepo)</name>
    <name type="common">CMV</name>
    <dbReference type="NCBI Taxonomy" id="117125"/>
    <lineage>
        <taxon>Viruses</taxon>
        <taxon>Riboviria</taxon>
        <taxon>Orthornavirae</taxon>
        <taxon>Kitrinoviricota</taxon>
        <taxon>Alsuviricetes</taxon>
        <taxon>Martellivirales</taxon>
        <taxon>Bromoviridae</taxon>
        <taxon>Cucumovirus</taxon>
        <taxon>Cucumber mosaic virus</taxon>
    </lineage>
</organism>
<dbReference type="EMBL" id="D43798">
    <property type="protein sequence ID" value="BAA07856.1"/>
    <property type="molecule type" value="Genomic_RNA"/>
</dbReference>
<dbReference type="EMBL" id="D28488">
    <property type="protein sequence ID" value="BAA05848.1"/>
    <property type="molecule type" value="Genomic_RNA"/>
</dbReference>
<dbReference type="GO" id="GO:0044219">
    <property type="term" value="C:host cell plasmodesma"/>
    <property type="evidence" value="ECO:0007669"/>
    <property type="project" value="UniProtKB-SubCell"/>
</dbReference>
<dbReference type="GO" id="GO:0046740">
    <property type="term" value="P:transport of virus in host, cell to cell"/>
    <property type="evidence" value="ECO:0007669"/>
    <property type="project" value="UniProtKB-KW"/>
</dbReference>
<dbReference type="InterPro" id="IPR000603">
    <property type="entry name" value="MPV"/>
</dbReference>
<dbReference type="Pfam" id="PF00803">
    <property type="entry name" value="3A"/>
    <property type="match status" value="1"/>
</dbReference>
<sequence length="279" mass="30503">MAFQGTSRTLTQQSSAATSDDLQKILFSPEAIKKMATECDLGRHHWMRADNAISVRPLVPEVTHGRIASFFKSGYDVGELCSKGYMSVPQVLCAVTRTVSTDAEGSLRIYLADLGDKELSPIDGQCVSLHNHDLPALVSFQPTYDCPMETVGNRKRCFAVVIERHGYIGYTGTTASVCSNWQARFSSKNNNYTHIAAGKTLVLPFNRLAEQTKPSAVARLLKSQLNNIESSQYLLTNVKINQNARSESEELNVESPPAAIGSSSASRSEAFRPQVVNGL</sequence>
<proteinExistence type="inferred from homology"/>
<protein>
    <recommendedName>
        <fullName>Movement protein</fullName>
        <shortName>MP</shortName>
    </recommendedName>
    <alternativeName>
        <fullName>Protein 3A</fullName>
    </alternativeName>
</protein>
<accession>Q89785</accession>
<gene>
    <name type="ORF">ORF3a</name>
</gene>
<keyword id="KW-1031">Host cell junction</keyword>
<keyword id="KW-0813">Transport</keyword>
<keyword id="KW-0916">Viral movement protein</keyword>